<sequence length="307" mass="34540">MKLTLNRILFSGLALSILFTLTGCVGRDAHGNPKGMIWEFLGKPMSYFIDYFANNAGLGYGLAIIIVTIIVRTLILPLGLYQSWKASYQSEKMAFLKPVFEPINKRIKQANSQEEKMAAQTELMAAQRAHGINPLGGIGCLPLLIQMPFFSAMYFAAQYTKGVSTSTFMGIDLGSRSLVLTAIIAALYFFQSWLSMMAVSEEQREQMKTMMYTMPIMMIFMSFSLPAGVGLYWLVGGFFSIIQQLITTYLLKPRLHKQIKEEYAKNPPKAYQSTSSRKDVTPSQNMEQANLPKKIKSNRNAGKQRKR</sequence>
<comment type="function">
    <text evidence="1">Required for the insertion and/or proper folding and/or complex formation of integral membrane proteins into the membrane. Involved in integration of membrane proteins that insert both dependently and independently of the Sec translocase complex, as well as at least some lipoproteins.</text>
</comment>
<comment type="subcellular location">
    <subcellularLocation>
        <location evidence="1">Cell membrane</location>
        <topology evidence="1">Multi-pass membrane protein</topology>
    </subcellularLocation>
</comment>
<comment type="similarity">
    <text evidence="1">Belongs to the OXA1/ALB3/YidC family. Type 2 subfamily.</text>
</comment>
<name>YIDC2_STRP3</name>
<reference key="1">
    <citation type="journal article" date="2002" name="Proc. Natl. Acad. Sci. U.S.A.">
        <title>Genome sequence of a serotype M3 strain of group A Streptococcus: phage-encoded toxins, the high-virulence phenotype, and clone emergence.</title>
        <authorList>
            <person name="Beres S.B."/>
            <person name="Sylva G.L."/>
            <person name="Barbian K.D."/>
            <person name="Lei B."/>
            <person name="Hoff J.S."/>
            <person name="Mammarella N.D."/>
            <person name="Liu M.-Y."/>
            <person name="Smoot J.C."/>
            <person name="Porcella S.F."/>
            <person name="Parkins L.D."/>
            <person name="Campbell D.S."/>
            <person name="Smith T.M."/>
            <person name="McCormick J.K."/>
            <person name="Leung D.Y.M."/>
            <person name="Schlievert P.M."/>
            <person name="Musser J.M."/>
        </authorList>
    </citation>
    <scope>NUCLEOTIDE SEQUENCE [LARGE SCALE GENOMIC DNA]</scope>
    <source>
        <strain>ATCC BAA-595 / MGAS315</strain>
    </source>
</reference>
<feature type="signal peptide" evidence="1">
    <location>
        <begin position="1"/>
        <end position="23"/>
    </location>
</feature>
<feature type="chain" id="PRO_0000020413" description="Membrane protein insertase YidC 2">
    <location>
        <begin position="24"/>
        <end position="307"/>
    </location>
</feature>
<feature type="transmembrane region" description="Helical" evidence="1">
    <location>
        <begin position="58"/>
        <end position="78"/>
    </location>
</feature>
<feature type="transmembrane region" description="Helical" evidence="1">
    <location>
        <begin position="135"/>
        <end position="155"/>
    </location>
</feature>
<feature type="transmembrane region" description="Helical" evidence="1">
    <location>
        <begin position="179"/>
        <end position="199"/>
    </location>
</feature>
<feature type="transmembrane region" description="Helical" evidence="1">
    <location>
        <begin position="209"/>
        <end position="225"/>
    </location>
</feature>
<feature type="transmembrane region" description="Helical" evidence="1">
    <location>
        <begin position="231"/>
        <end position="251"/>
    </location>
</feature>
<feature type="region of interest" description="Disordered" evidence="2">
    <location>
        <begin position="263"/>
        <end position="307"/>
    </location>
</feature>
<feature type="compositionally biased region" description="Polar residues" evidence="2">
    <location>
        <begin position="271"/>
        <end position="288"/>
    </location>
</feature>
<feature type="compositionally biased region" description="Basic residues" evidence="2">
    <location>
        <begin position="293"/>
        <end position="307"/>
    </location>
</feature>
<feature type="lipid moiety-binding region" description="N-palmitoyl cysteine" evidence="1">
    <location>
        <position position="24"/>
    </location>
</feature>
<feature type="lipid moiety-binding region" description="S-diacylglycerol cysteine" evidence="1">
    <location>
        <position position="24"/>
    </location>
</feature>
<keyword id="KW-1003">Cell membrane</keyword>
<keyword id="KW-0143">Chaperone</keyword>
<keyword id="KW-0449">Lipoprotein</keyword>
<keyword id="KW-0472">Membrane</keyword>
<keyword id="KW-0564">Palmitate</keyword>
<keyword id="KW-0653">Protein transport</keyword>
<keyword id="KW-0732">Signal</keyword>
<keyword id="KW-0812">Transmembrane</keyword>
<keyword id="KW-1133">Transmembrane helix</keyword>
<keyword id="KW-0813">Transport</keyword>
<dbReference type="EMBL" id="AE014074">
    <property type="protein sequence ID" value="AAM78863.1"/>
    <property type="molecule type" value="Genomic_DNA"/>
</dbReference>
<dbReference type="SMR" id="P0DC88"/>
<dbReference type="KEGG" id="spg:SpyM3_0256"/>
<dbReference type="HOGENOM" id="CLU_036138_5_1_9"/>
<dbReference type="Proteomes" id="UP000000564">
    <property type="component" value="Chromosome"/>
</dbReference>
<dbReference type="GO" id="GO:0005886">
    <property type="term" value="C:plasma membrane"/>
    <property type="evidence" value="ECO:0007669"/>
    <property type="project" value="UniProtKB-SubCell"/>
</dbReference>
<dbReference type="GO" id="GO:0032977">
    <property type="term" value="F:membrane insertase activity"/>
    <property type="evidence" value="ECO:0007669"/>
    <property type="project" value="InterPro"/>
</dbReference>
<dbReference type="GO" id="GO:0051205">
    <property type="term" value="P:protein insertion into membrane"/>
    <property type="evidence" value="ECO:0007669"/>
    <property type="project" value="TreeGrafter"/>
</dbReference>
<dbReference type="GO" id="GO:0015031">
    <property type="term" value="P:protein transport"/>
    <property type="evidence" value="ECO:0007669"/>
    <property type="project" value="UniProtKB-KW"/>
</dbReference>
<dbReference type="CDD" id="cd20070">
    <property type="entry name" value="5TM_YidC_Alb3"/>
    <property type="match status" value="1"/>
</dbReference>
<dbReference type="HAMAP" id="MF_01811">
    <property type="entry name" value="YidC_type2"/>
    <property type="match status" value="1"/>
</dbReference>
<dbReference type="InterPro" id="IPR001708">
    <property type="entry name" value="YidC/ALB3/OXA1/COX18"/>
</dbReference>
<dbReference type="InterPro" id="IPR028055">
    <property type="entry name" value="YidC/Oxa/ALB_C"/>
</dbReference>
<dbReference type="InterPro" id="IPR023060">
    <property type="entry name" value="YidC/YidC1/YidC2_Firmicutes"/>
</dbReference>
<dbReference type="InterPro" id="IPR047196">
    <property type="entry name" value="YidC_ALB_C"/>
</dbReference>
<dbReference type="NCBIfam" id="NF002687">
    <property type="entry name" value="PRK02463.1"/>
    <property type="match status" value="1"/>
</dbReference>
<dbReference type="NCBIfam" id="TIGR03592">
    <property type="entry name" value="yidC_oxa1_cterm"/>
    <property type="match status" value="1"/>
</dbReference>
<dbReference type="PANTHER" id="PTHR12428:SF65">
    <property type="entry name" value="CYTOCHROME C OXIDASE ASSEMBLY PROTEIN COX18, MITOCHONDRIAL"/>
    <property type="match status" value="1"/>
</dbReference>
<dbReference type="PANTHER" id="PTHR12428">
    <property type="entry name" value="OXA1"/>
    <property type="match status" value="1"/>
</dbReference>
<dbReference type="Pfam" id="PF02096">
    <property type="entry name" value="60KD_IMP"/>
    <property type="match status" value="1"/>
</dbReference>
<dbReference type="PROSITE" id="PS51257">
    <property type="entry name" value="PROKAR_LIPOPROTEIN"/>
    <property type="match status" value="1"/>
</dbReference>
<proteinExistence type="inferred from homology"/>
<protein>
    <recommendedName>
        <fullName evidence="1">Membrane protein insertase YidC 2</fullName>
    </recommendedName>
    <alternativeName>
        <fullName evidence="1">Foldase YidC 2</fullName>
    </alternativeName>
    <alternativeName>
        <fullName evidence="1">Membrane integrase YidC 2</fullName>
    </alternativeName>
    <alternativeName>
        <fullName evidence="1">Membrane protein YidC 2</fullName>
    </alternativeName>
</protein>
<gene>
    <name evidence="1" type="primary">yidC2</name>
    <name type="ordered locus">SpyM3_0256</name>
</gene>
<accession>P0DC88</accession>
<accession>Q8K8J2</accession>
<evidence type="ECO:0000255" key="1">
    <source>
        <dbReference type="HAMAP-Rule" id="MF_01811"/>
    </source>
</evidence>
<evidence type="ECO:0000256" key="2">
    <source>
        <dbReference type="SAM" id="MobiDB-lite"/>
    </source>
</evidence>
<organism>
    <name type="scientific">Streptococcus pyogenes serotype M3 (strain ATCC BAA-595 / MGAS315)</name>
    <dbReference type="NCBI Taxonomy" id="198466"/>
    <lineage>
        <taxon>Bacteria</taxon>
        <taxon>Bacillati</taxon>
        <taxon>Bacillota</taxon>
        <taxon>Bacilli</taxon>
        <taxon>Lactobacillales</taxon>
        <taxon>Streptococcaceae</taxon>
        <taxon>Streptococcus</taxon>
    </lineage>
</organism>